<dbReference type="EMBL" id="L42023">
    <property type="protein sequence ID" value="AAC22819.1"/>
    <property type="molecule type" value="Genomic_DNA"/>
</dbReference>
<dbReference type="PIR" id="C64187">
    <property type="entry name" value="C64187"/>
</dbReference>
<dbReference type="RefSeq" id="NP_439322.1">
    <property type="nucleotide sequence ID" value="NC_000907.1"/>
</dbReference>
<dbReference type="SMR" id="P43840"/>
<dbReference type="STRING" id="71421.HI_1164"/>
<dbReference type="EnsemblBacteria" id="AAC22819">
    <property type="protein sequence ID" value="AAC22819"/>
    <property type="gene ID" value="HI_1164"/>
</dbReference>
<dbReference type="KEGG" id="hin:HI_1164"/>
<dbReference type="PATRIC" id="fig|71421.8.peg.1216"/>
<dbReference type="eggNOG" id="COG2885">
    <property type="taxonomic scope" value="Bacteria"/>
</dbReference>
<dbReference type="eggNOG" id="COG3637">
    <property type="taxonomic scope" value="Bacteria"/>
</dbReference>
<dbReference type="HOGENOM" id="CLU_031536_0_0_6"/>
<dbReference type="OrthoDB" id="1149075at2"/>
<dbReference type="PhylomeDB" id="P43840"/>
<dbReference type="BioCyc" id="HINF71421:G1GJ1-1198-MONOMER"/>
<dbReference type="Proteomes" id="UP000000579">
    <property type="component" value="Chromosome"/>
</dbReference>
<dbReference type="GO" id="GO:0009279">
    <property type="term" value="C:cell outer membrane"/>
    <property type="evidence" value="ECO:0000318"/>
    <property type="project" value="GO_Central"/>
</dbReference>
<dbReference type="GO" id="GO:0046930">
    <property type="term" value="C:pore complex"/>
    <property type="evidence" value="ECO:0007669"/>
    <property type="project" value="UniProtKB-KW"/>
</dbReference>
<dbReference type="GO" id="GO:0015288">
    <property type="term" value="F:porin activity"/>
    <property type="evidence" value="ECO:0007669"/>
    <property type="project" value="UniProtKB-UniRule"/>
</dbReference>
<dbReference type="GO" id="GO:0034220">
    <property type="term" value="P:monoatomic ion transmembrane transport"/>
    <property type="evidence" value="ECO:0007669"/>
    <property type="project" value="UniProtKB-UniRule"/>
</dbReference>
<dbReference type="CDD" id="cd07185">
    <property type="entry name" value="OmpA_C-like"/>
    <property type="match status" value="1"/>
</dbReference>
<dbReference type="FunFam" id="3.30.1330.60:FF:000004">
    <property type="entry name" value="Outer membrane protein A"/>
    <property type="match status" value="1"/>
</dbReference>
<dbReference type="Gene3D" id="2.40.160.20">
    <property type="match status" value="1"/>
</dbReference>
<dbReference type="Gene3D" id="3.30.1330.60">
    <property type="entry name" value="OmpA-like domain"/>
    <property type="match status" value="1"/>
</dbReference>
<dbReference type="HAMAP" id="MF_00842">
    <property type="entry name" value="OmpA"/>
    <property type="match status" value="1"/>
</dbReference>
<dbReference type="InterPro" id="IPR050330">
    <property type="entry name" value="Bact_OuterMem_StrucFunc"/>
</dbReference>
<dbReference type="InterPro" id="IPR011250">
    <property type="entry name" value="OMP/PagP_b-brl"/>
</dbReference>
<dbReference type="InterPro" id="IPR006664">
    <property type="entry name" value="OMP_bac"/>
</dbReference>
<dbReference type="InterPro" id="IPR002368">
    <property type="entry name" value="OmpA"/>
</dbReference>
<dbReference type="InterPro" id="IPR006665">
    <property type="entry name" value="OmpA-like"/>
</dbReference>
<dbReference type="InterPro" id="IPR006690">
    <property type="entry name" value="OMPA-like_CS"/>
</dbReference>
<dbReference type="InterPro" id="IPR036737">
    <property type="entry name" value="OmpA-like_sf"/>
</dbReference>
<dbReference type="InterPro" id="IPR000498">
    <property type="entry name" value="OmpA-like_TM_dom"/>
</dbReference>
<dbReference type="NCBIfam" id="NF008071">
    <property type="entry name" value="PRK10808.1"/>
    <property type="match status" value="1"/>
</dbReference>
<dbReference type="PANTHER" id="PTHR30329:SF21">
    <property type="entry name" value="LIPOPROTEIN YIAD-RELATED"/>
    <property type="match status" value="1"/>
</dbReference>
<dbReference type="PANTHER" id="PTHR30329">
    <property type="entry name" value="STATOR ELEMENT OF FLAGELLAR MOTOR COMPLEX"/>
    <property type="match status" value="1"/>
</dbReference>
<dbReference type="Pfam" id="PF00691">
    <property type="entry name" value="OmpA"/>
    <property type="match status" value="1"/>
</dbReference>
<dbReference type="Pfam" id="PF01389">
    <property type="entry name" value="OmpA_membrane"/>
    <property type="match status" value="1"/>
</dbReference>
<dbReference type="PRINTS" id="PR01021">
    <property type="entry name" value="OMPADOMAIN"/>
</dbReference>
<dbReference type="PRINTS" id="PR01022">
    <property type="entry name" value="OUTRMMBRANEA"/>
</dbReference>
<dbReference type="SUPFAM" id="SSF56925">
    <property type="entry name" value="OMPA-like"/>
    <property type="match status" value="1"/>
</dbReference>
<dbReference type="SUPFAM" id="SSF103088">
    <property type="entry name" value="OmpA-like"/>
    <property type="match status" value="1"/>
</dbReference>
<dbReference type="PROSITE" id="PS01068">
    <property type="entry name" value="OMPA_1"/>
    <property type="match status" value="1"/>
</dbReference>
<dbReference type="PROSITE" id="PS51123">
    <property type="entry name" value="OMPA_2"/>
    <property type="match status" value="1"/>
</dbReference>
<reference key="1">
    <citation type="journal article" date="1995" name="Science">
        <title>Whole-genome random sequencing and assembly of Haemophilus influenzae Rd.</title>
        <authorList>
            <person name="Fleischmann R.D."/>
            <person name="Adams M.D."/>
            <person name="White O."/>
            <person name="Clayton R.A."/>
            <person name="Kirkness E.F."/>
            <person name="Kerlavage A.R."/>
            <person name="Bult C.J."/>
            <person name="Tomb J.-F."/>
            <person name="Dougherty B.A."/>
            <person name="Merrick J.M."/>
            <person name="McKenney K."/>
            <person name="Sutton G.G."/>
            <person name="FitzHugh W."/>
            <person name="Fields C.A."/>
            <person name="Gocayne J.D."/>
            <person name="Scott J.D."/>
            <person name="Shirley R."/>
            <person name="Liu L.-I."/>
            <person name="Glodek A."/>
            <person name="Kelley J.M."/>
            <person name="Weidman J.F."/>
            <person name="Phillips C.A."/>
            <person name="Spriggs T."/>
            <person name="Hedblom E."/>
            <person name="Cotton M.D."/>
            <person name="Utterback T.R."/>
            <person name="Hanna M.C."/>
            <person name="Nguyen D.T."/>
            <person name="Saudek D.M."/>
            <person name="Brandon R.C."/>
            <person name="Fine L.D."/>
            <person name="Fritchman J.L."/>
            <person name="Fuhrmann J.L."/>
            <person name="Geoghagen N.S.M."/>
            <person name="Gnehm C.L."/>
            <person name="McDonald L.A."/>
            <person name="Small K.V."/>
            <person name="Fraser C.M."/>
            <person name="Smith H.O."/>
            <person name="Venter J.C."/>
        </authorList>
    </citation>
    <scope>NUCLEOTIDE SEQUENCE [LARGE SCALE GENOMIC DNA]</scope>
    <source>
        <strain>ATCC 51907 / DSM 11121 / KW20 / Rd</strain>
    </source>
</reference>
<reference key="2">
    <citation type="journal article" date="1983" name="J. Bacteriol.">
        <title>Characteristics of major outer membrane proteins of Haemophilus influenzae.</title>
        <authorList>
            <person name="van Alphen L."/>
            <person name="Riemens T."/>
            <person name="Poolman J."/>
            <person name="Zanen H.C."/>
        </authorList>
    </citation>
    <scope>SUBCELLULAR LOCATION</scope>
    <scope>IMMUNOLOGICAL SIMILARITY TO OMPA</scope>
    <source>
        <strain>760705 / Type B</strain>
    </source>
</reference>
<reference key="3">
    <citation type="journal article" date="2006" name="Biophys. J.">
        <title>Pore characteristics of nontypeable Haemophilus influenzae outer membrane protein P5 in planar lipid bilayers.</title>
        <authorList>
            <person name="Zakharian E."/>
            <person name="Reusch R.N."/>
        </authorList>
    </citation>
    <scope>FUNCTION</scope>
    <scope>FORMS LARGE AND SMALL PORES</scope>
    <source>
        <strain>NTHi UC19</strain>
    </source>
</reference>
<protein>
    <recommendedName>
        <fullName evidence="4">Outer membrane protein P5</fullName>
        <shortName>OMP P5</shortName>
    </recommendedName>
    <alternativeName>
        <fullName evidence="1">Outer membrane porin A</fullName>
    </alternativeName>
    <alternativeName>
        <fullName>Outer membrane protein OmpA</fullName>
    </alternativeName>
    <alternativeName>
        <fullName evidence="5">Outer membrane protein d</fullName>
    </alternativeName>
</protein>
<organism>
    <name type="scientific">Haemophilus influenzae (strain ATCC 51907 / DSM 11121 / KW20 / Rd)</name>
    <dbReference type="NCBI Taxonomy" id="71421"/>
    <lineage>
        <taxon>Bacteria</taxon>
        <taxon>Pseudomonadati</taxon>
        <taxon>Pseudomonadota</taxon>
        <taxon>Gammaproteobacteria</taxon>
        <taxon>Pasteurellales</taxon>
        <taxon>Pasteurellaceae</taxon>
        <taxon>Haemophilus</taxon>
    </lineage>
</organism>
<sequence>MKKTAIALVVAGLAAASVAQAAPQENTFYAGVKAGQASFHDGLRALAREYKVGYHRNSFTYGVFGGYQILNQNNLGLAVELGYDDFGRAKGREKGKTVVKHTNHGTHLSLKGSYEVLEGLDVYGKAGVALVRSDYKLYNENSSTLKKLGEHHRARASGLFAVGAEYAVLPELAVRLEYQWLTRVGKYRPQDKPNTALNYNPWIGSINAGISYRFGQGAAPVVAAPEVVSKTFSLNSDVTFAFGKANLKPQAQATLDSIYGEMSQVKSAKVAVAGYTDRIGSDAFNVKLSQERADSVANYFVAKGVAADAISATGYGKANPVTGATCDQVKGRKALIACFAPDRRVEIAVNGTK</sequence>
<keyword id="KW-0998">Cell outer membrane</keyword>
<keyword id="KW-1015">Disulfide bond</keyword>
<keyword id="KW-0406">Ion transport</keyword>
<keyword id="KW-0472">Membrane</keyword>
<keyword id="KW-0626">Porin</keyword>
<keyword id="KW-1185">Reference proteome</keyword>
<keyword id="KW-0732">Signal</keyword>
<keyword id="KW-0812">Transmembrane</keyword>
<keyword id="KW-1134">Transmembrane beta strand</keyword>
<keyword id="KW-0813">Transport</keyword>
<accession>P43840</accession>
<gene>
    <name evidence="1" type="primary">ompA</name>
    <name type="synonym">ompP5</name>
    <name type="ordered locus">HI_1164</name>
</gene>
<proteinExistence type="inferred from homology"/>
<evidence type="ECO:0000255" key="1">
    <source>
        <dbReference type="HAMAP-Rule" id="MF_00842"/>
    </source>
</evidence>
<evidence type="ECO:0000269" key="2">
    <source>
    </source>
</evidence>
<evidence type="ECO:0000269" key="3">
    <source>
    </source>
</evidence>
<evidence type="ECO:0000303" key="4">
    <source>
    </source>
</evidence>
<evidence type="ECO:0000303" key="5">
    <source>
    </source>
</evidence>
<name>OMP5_HAEIN</name>
<feature type="signal peptide" evidence="1">
    <location>
        <begin position="1"/>
        <end position="21"/>
    </location>
</feature>
<feature type="chain" id="PRO_0000020107" description="Outer membrane protein P5" evidence="1">
    <location>
        <begin position="22"/>
        <end position="353"/>
    </location>
</feature>
<feature type="transmembrane region" description="Beta stranded" evidence="1">
    <location>
        <begin position="27"/>
        <end position="37"/>
    </location>
</feature>
<feature type="transmembrane region" description="Beta stranded" evidence="1">
    <location>
        <begin position="58"/>
        <end position="69"/>
    </location>
</feature>
<feature type="transmembrane region" description="Beta stranded" evidence="1">
    <location>
        <begin position="77"/>
        <end position="85"/>
    </location>
</feature>
<feature type="transmembrane region" description="Beta stranded" evidence="1">
    <location>
        <begin position="104"/>
        <end position="115"/>
    </location>
</feature>
<feature type="transmembrane region" description="Beta stranded" evidence="1">
    <location>
        <begin position="120"/>
        <end position="128"/>
    </location>
</feature>
<feature type="transmembrane region" description="Beta stranded" evidence="1">
    <location>
        <begin position="158"/>
        <end position="167"/>
    </location>
</feature>
<feature type="transmembrane region" description="Beta stranded" evidence="1">
    <location>
        <begin position="172"/>
        <end position="179"/>
    </location>
</feature>
<feature type="transmembrane region" description="Beta stranded" evidence="1">
    <location>
        <begin position="205"/>
        <end position="213"/>
    </location>
</feature>
<feature type="domain" description="OmpA-like" evidence="1">
    <location>
        <begin position="227"/>
        <end position="353"/>
    </location>
</feature>
<feature type="site" description="Part of salt bridge gating mechanism" evidence="1">
    <location>
        <position position="80"/>
    </location>
</feature>
<feature type="site" description="Part of salt bridge gating mechanism" evidence="1">
    <location>
        <position position="175"/>
    </location>
</feature>
<feature type="disulfide bond" evidence="1">
    <location>
        <begin position="326"/>
        <end position="338"/>
    </location>
</feature>
<comment type="function">
    <text evidence="1">With TolR probably plays a role in maintaining the position of the peptidoglycan cell wall in the periplasm. Acts as a porin with low permeability that allows slow penetration of small solutes; an internal gate slows down solute passage.</text>
</comment>
<comment type="function">
    <text evidence="2">Reconstitution in planar bilayers with lithium dodecyl sulfate-solublized P5 yields narrow pores (58 pS conductance) with a low probability of opening, whereas n-octyl-bD-glucopyranoside-solubilized P5 forms large pores (1.1 nS conductance) with high open probability. The large pore easily converts to the smaller pore at room temperature; at 42 degrees Celsius the smaller pore converts to the larger one.</text>
</comment>
<comment type="subunit">
    <text evidence="1">Monomer and homodimer.</text>
</comment>
<comment type="subcellular location">
    <subcellularLocation>
        <location evidence="1 3">Cell outer membrane</location>
        <topology evidence="1">Multi-pass membrane protein</topology>
    </subcellularLocation>
</comment>
<comment type="domain">
    <text evidence="1">The extracellular loops are most variable in sequence, and in some bacteria confer sensitivity to phage and/or colicins.</text>
</comment>
<comment type="miscellaneous">
    <text evidence="3">Cross reacts with antisera againt E.coli OmpA.</text>
</comment>
<comment type="similarity">
    <text evidence="1">Belongs to the outer membrane OOP (TC 1.B.6) superfamily. OmpA family.</text>
</comment>